<protein>
    <recommendedName>
        <fullName>Outer capsid protein VP5</fullName>
    </recommendedName>
</protein>
<proteinExistence type="inferred from homology"/>
<name>VP5_BTV11</name>
<organism>
    <name type="scientific">Bluetongue virus 11 (isolate USA)</name>
    <name type="common">BTV 11</name>
    <dbReference type="NCBI Taxonomy" id="33716"/>
    <lineage>
        <taxon>Viruses</taxon>
        <taxon>Riboviria</taxon>
        <taxon>Orthornavirae</taxon>
        <taxon>Duplornaviricota</taxon>
        <taxon>Resentoviricetes</taxon>
        <taxon>Reovirales</taxon>
        <taxon>Sedoreoviridae</taxon>
        <taxon>Orbivirus</taxon>
        <taxon>Bluetongue virus</taxon>
    </lineage>
</organism>
<accession>P69363</accession>
<accession>P33430</accession>
<accession>P33476</accession>
<dbReference type="EMBL" id="M73715">
    <property type="protein sequence ID" value="AAA42823.1"/>
    <property type="molecule type" value="Genomic_RNA"/>
</dbReference>
<dbReference type="SMR" id="P69363"/>
<dbReference type="GO" id="GO:0039624">
    <property type="term" value="C:viral outer capsid"/>
    <property type="evidence" value="ECO:0007669"/>
    <property type="project" value="UniProtKB-KW"/>
</dbReference>
<dbReference type="GO" id="GO:0005198">
    <property type="term" value="F:structural molecule activity"/>
    <property type="evidence" value="ECO:0007669"/>
    <property type="project" value="InterPro"/>
</dbReference>
<dbReference type="GO" id="GO:0140267">
    <property type="term" value="P:symbiont entry into host cell via permeabilization of host membrane"/>
    <property type="evidence" value="ECO:0007669"/>
    <property type="project" value="UniProtKB-KW"/>
</dbReference>
<dbReference type="InterPro" id="IPR000145">
    <property type="entry name" value="Capsid_VP5_Orbivir"/>
</dbReference>
<dbReference type="Pfam" id="PF00901">
    <property type="entry name" value="Orbi_VP5"/>
    <property type="match status" value="1"/>
</dbReference>
<evidence type="ECO:0000250" key="1"/>
<evidence type="ECO:0000305" key="2"/>
<feature type="chain" id="PRO_0000222713" description="Outer capsid protein VP5">
    <location>
        <begin position="1"/>
        <end position="526"/>
    </location>
</feature>
<feature type="region of interest" description="Involved in membrane permeabilization" evidence="1">
    <location>
        <begin position="1"/>
        <end position="42"/>
    </location>
</feature>
<sequence length="526" mass="59279">MGKIIKSLSRFGKKVGNALTSNTAKKIYSTIGKAAERFAESEIGAATIDGLVQGSVHSIITGESYGESVKQAVLLNVLGTGEELPDPLSPGERGIQTKIKELEDEQRNELVRLKYNKEITKEFGKELEEVYDFMNGEAKEEEVVQEQYSMLCKAVDSYEKILKAEDSKMAMLARALQREASERSQDEIKMVKEYRQKIDALKNAIEIERDGMQEEAIQEIAGMTADVLEAASEEVPLIGAGMATAVATGRAIEGAYKLKKVINALSGIDLSHMRSPKIEPTIIATTLEHRFKEIPDEQLAVSVLNKKTAVTDNCNEIAHIKQEILPKFKQIMDEEKEIEGIEDKVIHPRVMMRFKIPRTQQPQIHIYAAPWDSDDVFFFHCVSHHHRNESFFLGFDLGIDVVHFEDLTSHWHALGLAQEASGRTLTEAYREFLNLSISSTYSSAIHARRMIRSRAVHPIFLGSMHYDITYEALKNNAQRIVYDEELQMHILRGPLHFQRRAILGALKFGVKILGDKIDVPLFLRNA</sequence>
<reference key="1">
    <citation type="journal article" date="1991" name="Virus Res.">
        <title>Complete nucleotide and deduced amino acid sequence of genome segment 5 encoding the outer capsid protein, VP5, of a U.S. isolate of bluetongue virus serotype 11.</title>
        <authorList>
            <person name="Dunn S.J."/>
            <person name="Hsu D."/>
            <person name="Zee Y.C."/>
            <person name="Stott J.L."/>
        </authorList>
    </citation>
    <scope>NUCLEOTIDE SEQUENCE [GENOMIC RNA]</scope>
</reference>
<organismHost>
    <name type="scientific">Antilocapra americana</name>
    <name type="common">Pronghorn</name>
    <dbReference type="NCBI Taxonomy" id="9891"/>
</organismHost>
<organismHost>
    <name type="scientific">Bos taurus</name>
    <name type="common">Bovine</name>
    <dbReference type="NCBI Taxonomy" id="9913"/>
</organismHost>
<organismHost>
    <name type="scientific">Capra hircus</name>
    <name type="common">Goat</name>
    <dbReference type="NCBI Taxonomy" id="9925"/>
</organismHost>
<organismHost>
    <name type="scientific">Culicoides variipennis</name>
    <name type="common">Biting midge</name>
    <dbReference type="NCBI Taxonomy" id="46212"/>
</organismHost>
<organismHost>
    <name type="scientific">Ovis aries</name>
    <name type="common">Sheep</name>
    <dbReference type="NCBI Taxonomy" id="9940"/>
</organismHost>
<gene>
    <name type="primary">Segment-6</name>
    <name type="synonym">M3</name>
</gene>
<comment type="function">
    <text evidence="1">VP5 protein is one of the two proteins (with VP2) which constitute the virus particle outer capsid. Acts as a membrane permeabilization protein that mediates release of viral particles from endosomal compartments into the cytoplasm. Permeabilization activity is probably negatively regulated by VP2 and is triggered by endosomal degradation of VP2 and exposure to low pH (By similarity).</text>
</comment>
<comment type="subcellular location">
    <subcellularLocation>
        <location evidence="2">Virion</location>
    </subcellularLocation>
</comment>
<comment type="similarity">
    <text evidence="2">Belongs to the orbivirus VP5 family.</text>
</comment>
<keyword id="KW-0167">Capsid protein</keyword>
<keyword id="KW-1152">Outer capsid protein</keyword>
<keyword id="KW-1162">Viral penetration into host cytoplasm</keyword>
<keyword id="KW-1173">Viral penetration via permeabilization of host membrane</keyword>
<keyword id="KW-0946">Virion</keyword>
<keyword id="KW-1160">Virus entry into host cell</keyword>